<dbReference type="EMBL" id="M74091">
    <property type="status" value="NOT_ANNOTATED_CDS"/>
    <property type="molecule type" value="mRNA"/>
</dbReference>
<dbReference type="EMBL" id="U40739">
    <property type="protein sequence ID" value="AAC50825.1"/>
    <property type="status" value="ALT_INIT"/>
    <property type="molecule type" value="Genomic_DNA"/>
</dbReference>
<dbReference type="EMBL" id="U40728">
    <property type="protein sequence ID" value="AAC50825.1"/>
    <property type="status" value="JOINED"/>
    <property type="molecule type" value="Genomic_DNA"/>
</dbReference>
<dbReference type="EMBL" id="U40729">
    <property type="protein sequence ID" value="AAC50825.1"/>
    <property type="status" value="JOINED"/>
    <property type="molecule type" value="Genomic_DNA"/>
</dbReference>
<dbReference type="EMBL" id="U40730">
    <property type="protein sequence ID" value="AAC50825.1"/>
    <property type="status" value="JOINED"/>
    <property type="molecule type" value="Genomic_DNA"/>
</dbReference>
<dbReference type="EMBL" id="U40731">
    <property type="protein sequence ID" value="AAC50825.1"/>
    <property type="status" value="JOINED"/>
    <property type="molecule type" value="Genomic_DNA"/>
</dbReference>
<dbReference type="EMBL" id="U40732">
    <property type="protein sequence ID" value="AAC50825.1"/>
    <property type="status" value="JOINED"/>
    <property type="molecule type" value="Genomic_DNA"/>
</dbReference>
<dbReference type="EMBL" id="U40733">
    <property type="protein sequence ID" value="AAC50825.1"/>
    <property type="status" value="JOINED"/>
    <property type="molecule type" value="Genomic_DNA"/>
</dbReference>
<dbReference type="EMBL" id="U40734">
    <property type="protein sequence ID" value="AAC50825.1"/>
    <property type="status" value="JOINED"/>
    <property type="molecule type" value="Genomic_DNA"/>
</dbReference>
<dbReference type="EMBL" id="U40735">
    <property type="protein sequence ID" value="AAC50825.1"/>
    <property type="status" value="JOINED"/>
    <property type="molecule type" value="Genomic_DNA"/>
</dbReference>
<dbReference type="EMBL" id="U40736">
    <property type="protein sequence ID" value="AAC50825.1"/>
    <property type="status" value="JOINED"/>
    <property type="molecule type" value="Genomic_DNA"/>
</dbReference>
<dbReference type="EMBL" id="U40737">
    <property type="protein sequence ID" value="AAC50825.1"/>
    <property type="status" value="JOINED"/>
    <property type="molecule type" value="Genomic_DNA"/>
</dbReference>
<dbReference type="EMBL" id="U40738">
    <property type="protein sequence ID" value="AAC50825.1"/>
    <property type="status" value="JOINED"/>
    <property type="molecule type" value="Genomic_DNA"/>
</dbReference>
<dbReference type="EMBL" id="AK298558">
    <property type="protein sequence ID" value="BAG60753.1"/>
    <property type="molecule type" value="mRNA"/>
</dbReference>
<dbReference type="EMBL" id="AL137784">
    <property type="status" value="NOT_ANNOTATED_CDS"/>
    <property type="molecule type" value="Genomic_DNA"/>
</dbReference>
<dbReference type="CCDS" id="CCDS34502.1">
    <molecule id="P24863-1"/>
</dbReference>
<dbReference type="CCDS" id="CCDS47461.1">
    <molecule id="P24863-2"/>
</dbReference>
<dbReference type="PIR" id="A40268">
    <property type="entry name" value="A40268"/>
</dbReference>
<dbReference type="RefSeq" id="NP_001013417.1">
    <molecule id="P24863-2"/>
    <property type="nucleotide sequence ID" value="NM_001013399.2"/>
</dbReference>
<dbReference type="RefSeq" id="NP_005181.2">
    <molecule id="P24863-1"/>
    <property type="nucleotide sequence ID" value="NM_005190.4"/>
</dbReference>
<dbReference type="PDB" id="3RGF">
    <property type="method" value="X-ray"/>
    <property type="resolution" value="2.20 A"/>
    <property type="chains" value="B=1-283"/>
</dbReference>
<dbReference type="PDB" id="4CRL">
    <property type="method" value="X-ray"/>
    <property type="resolution" value="2.40 A"/>
    <property type="chains" value="B=1-283"/>
</dbReference>
<dbReference type="PDB" id="4F6S">
    <property type="method" value="X-ray"/>
    <property type="resolution" value="2.60 A"/>
    <property type="chains" value="B=1-283"/>
</dbReference>
<dbReference type="PDB" id="4F6U">
    <property type="method" value="X-ray"/>
    <property type="resolution" value="2.10 A"/>
    <property type="chains" value="B=1-283"/>
</dbReference>
<dbReference type="PDB" id="4F6W">
    <property type="method" value="X-ray"/>
    <property type="resolution" value="2.39 A"/>
    <property type="chains" value="B=1-283"/>
</dbReference>
<dbReference type="PDB" id="4F70">
    <property type="method" value="X-ray"/>
    <property type="resolution" value="3.00 A"/>
    <property type="chains" value="B=1-283"/>
</dbReference>
<dbReference type="PDB" id="4F7J">
    <property type="method" value="X-ray"/>
    <property type="resolution" value="2.60 A"/>
    <property type="chains" value="B=1-283"/>
</dbReference>
<dbReference type="PDB" id="4F7L">
    <property type="method" value="X-ray"/>
    <property type="resolution" value="2.90 A"/>
    <property type="chains" value="B=1-283"/>
</dbReference>
<dbReference type="PDB" id="4F7N">
    <property type="method" value="X-ray"/>
    <property type="resolution" value="2.65 A"/>
    <property type="chains" value="B=1-283"/>
</dbReference>
<dbReference type="PDB" id="4F7S">
    <property type="method" value="X-ray"/>
    <property type="resolution" value="2.20 A"/>
    <property type="chains" value="B=1-283"/>
</dbReference>
<dbReference type="PDB" id="4G6L">
    <property type="method" value="X-ray"/>
    <property type="resolution" value="2.70 A"/>
    <property type="chains" value="B=1-283"/>
</dbReference>
<dbReference type="PDB" id="5BNJ">
    <property type="method" value="X-ray"/>
    <property type="resolution" value="2.64 A"/>
    <property type="chains" value="B=1-283"/>
</dbReference>
<dbReference type="PDB" id="5CEI">
    <property type="method" value="X-ray"/>
    <property type="resolution" value="2.24 A"/>
    <property type="chains" value="B=1-283"/>
</dbReference>
<dbReference type="PDB" id="5FGK">
    <property type="method" value="X-ray"/>
    <property type="resolution" value="2.36 A"/>
    <property type="chains" value="B=1-264"/>
</dbReference>
<dbReference type="PDB" id="5HBE">
    <property type="method" value="X-ray"/>
    <property type="resolution" value="2.38 A"/>
    <property type="chains" value="B=1-264"/>
</dbReference>
<dbReference type="PDB" id="5HBH">
    <property type="method" value="X-ray"/>
    <property type="resolution" value="2.50 A"/>
    <property type="chains" value="B=1-264"/>
</dbReference>
<dbReference type="PDB" id="5HBJ">
    <property type="method" value="X-ray"/>
    <property type="resolution" value="3.00 A"/>
    <property type="chains" value="B=1-264"/>
</dbReference>
<dbReference type="PDB" id="5HNB">
    <property type="method" value="X-ray"/>
    <property type="resolution" value="2.35 A"/>
    <property type="chains" value="B=1-264"/>
</dbReference>
<dbReference type="PDB" id="5HVY">
    <property type="method" value="X-ray"/>
    <property type="resolution" value="2.39 A"/>
    <property type="chains" value="B=1-283"/>
</dbReference>
<dbReference type="PDB" id="5I5Z">
    <property type="method" value="X-ray"/>
    <property type="resolution" value="2.60 A"/>
    <property type="chains" value="B=1-264"/>
</dbReference>
<dbReference type="PDB" id="5ICP">
    <property type="method" value="X-ray"/>
    <property type="resolution" value="2.18 A"/>
    <property type="chains" value="B=1-264"/>
</dbReference>
<dbReference type="PDB" id="5IDN">
    <property type="method" value="X-ray"/>
    <property type="resolution" value="2.26 A"/>
    <property type="chains" value="B=1-264"/>
</dbReference>
<dbReference type="PDB" id="5IDP">
    <property type="method" value="X-ray"/>
    <property type="resolution" value="2.65 A"/>
    <property type="chains" value="B=1-264"/>
</dbReference>
<dbReference type="PDB" id="5XQX">
    <property type="method" value="X-ray"/>
    <property type="resolution" value="2.30 A"/>
    <property type="chains" value="B=2-264"/>
</dbReference>
<dbReference type="PDB" id="5XS2">
    <property type="method" value="X-ray"/>
    <property type="resolution" value="2.04 A"/>
    <property type="chains" value="B=2-264"/>
</dbReference>
<dbReference type="PDB" id="6QTG">
    <property type="method" value="X-ray"/>
    <property type="resolution" value="2.70 A"/>
    <property type="chains" value="B=1-283"/>
</dbReference>
<dbReference type="PDB" id="6QTJ">
    <property type="method" value="X-ray"/>
    <property type="resolution" value="2.48 A"/>
    <property type="chains" value="B=1-283"/>
</dbReference>
<dbReference type="PDB" id="6R3S">
    <property type="method" value="X-ray"/>
    <property type="resolution" value="2.19 A"/>
    <property type="chains" value="B=1-283"/>
</dbReference>
<dbReference type="PDB" id="6T41">
    <property type="method" value="X-ray"/>
    <property type="resolution" value="2.45 A"/>
    <property type="chains" value="B=1-283"/>
</dbReference>
<dbReference type="PDB" id="6TPA">
    <property type="method" value="X-ray"/>
    <property type="resolution" value="2.80 A"/>
    <property type="chains" value="B=1-283"/>
</dbReference>
<dbReference type="PDB" id="6Y0A">
    <property type="method" value="X-ray"/>
    <property type="resolution" value="2.19 A"/>
    <property type="chains" value="B=1-280"/>
</dbReference>
<dbReference type="PDB" id="8TQ2">
    <property type="method" value="EM"/>
    <property type="resolution" value="3.80 A"/>
    <property type="chains" value="B=1-283"/>
</dbReference>
<dbReference type="PDB" id="8TQC">
    <property type="method" value="EM"/>
    <property type="resolution" value="3.80 A"/>
    <property type="chains" value="B=1-283"/>
</dbReference>
<dbReference type="PDB" id="8TQW">
    <property type="method" value="EM"/>
    <property type="resolution" value="8.20 A"/>
    <property type="chains" value="b=1-283"/>
</dbReference>
<dbReference type="PDB" id="9H8C">
    <property type="method" value="X-ray"/>
    <property type="resolution" value="2.57 A"/>
    <property type="chains" value="B=1-283"/>
</dbReference>
<dbReference type="PDB" id="9H8S">
    <property type="method" value="X-ray"/>
    <property type="resolution" value="2.16 A"/>
    <property type="chains" value="B=1-283"/>
</dbReference>
<dbReference type="PDBsum" id="3RGF"/>
<dbReference type="PDBsum" id="4CRL"/>
<dbReference type="PDBsum" id="4F6S"/>
<dbReference type="PDBsum" id="4F6U"/>
<dbReference type="PDBsum" id="4F6W"/>
<dbReference type="PDBsum" id="4F70"/>
<dbReference type="PDBsum" id="4F7J"/>
<dbReference type="PDBsum" id="4F7L"/>
<dbReference type="PDBsum" id="4F7N"/>
<dbReference type="PDBsum" id="4F7S"/>
<dbReference type="PDBsum" id="4G6L"/>
<dbReference type="PDBsum" id="5BNJ"/>
<dbReference type="PDBsum" id="5CEI"/>
<dbReference type="PDBsum" id="5FGK"/>
<dbReference type="PDBsum" id="5HBE"/>
<dbReference type="PDBsum" id="5HBH"/>
<dbReference type="PDBsum" id="5HBJ"/>
<dbReference type="PDBsum" id="5HNB"/>
<dbReference type="PDBsum" id="5HVY"/>
<dbReference type="PDBsum" id="5I5Z"/>
<dbReference type="PDBsum" id="5ICP"/>
<dbReference type="PDBsum" id="5IDN"/>
<dbReference type="PDBsum" id="5IDP"/>
<dbReference type="PDBsum" id="5XQX"/>
<dbReference type="PDBsum" id="5XS2"/>
<dbReference type="PDBsum" id="6QTG"/>
<dbReference type="PDBsum" id="6QTJ"/>
<dbReference type="PDBsum" id="6R3S"/>
<dbReference type="PDBsum" id="6T41"/>
<dbReference type="PDBsum" id="6TPA"/>
<dbReference type="PDBsum" id="6Y0A"/>
<dbReference type="PDBsum" id="8TQ2"/>
<dbReference type="PDBsum" id="8TQC"/>
<dbReference type="PDBsum" id="8TQW"/>
<dbReference type="PDBsum" id="9H8C"/>
<dbReference type="PDBsum" id="9H8S"/>
<dbReference type="EMDB" id="EMD-41499"/>
<dbReference type="EMDB" id="EMD-41502"/>
<dbReference type="EMDB" id="EMD-41565"/>
<dbReference type="SMR" id="P24863"/>
<dbReference type="BioGRID" id="107333">
    <property type="interactions" value="194"/>
</dbReference>
<dbReference type="ComplexPortal" id="CPX-1969">
    <property type="entry name" value="Cyclin C-CDK8 complex"/>
</dbReference>
<dbReference type="ComplexPortal" id="CPX-3232">
    <property type="entry name" value="CKM complex variant 1"/>
</dbReference>
<dbReference type="ComplexPortal" id="CPX-3263">
    <property type="entry name" value="CKM complex variant 2"/>
</dbReference>
<dbReference type="ComplexPortal" id="CPX-330">
    <property type="entry name" value="Cyclin C-CDK3 complex"/>
</dbReference>
<dbReference type="CORUM" id="P24863"/>
<dbReference type="DIP" id="DIP-32920N"/>
<dbReference type="FunCoup" id="P24863">
    <property type="interactions" value="2341"/>
</dbReference>
<dbReference type="IntAct" id="P24863">
    <property type="interactions" value="189"/>
</dbReference>
<dbReference type="MINT" id="P24863"/>
<dbReference type="STRING" id="9606.ENSP00000428982"/>
<dbReference type="BindingDB" id="P24863"/>
<dbReference type="ChEMBL" id="CHEMBL2401607"/>
<dbReference type="GlyGen" id="P24863">
    <property type="glycosylation" value="1 site, 1 O-linked glycan (1 site)"/>
</dbReference>
<dbReference type="iPTMnet" id="P24863"/>
<dbReference type="PhosphoSitePlus" id="P24863"/>
<dbReference type="SwissPalm" id="P24863"/>
<dbReference type="BioMuta" id="CCNC"/>
<dbReference type="DMDM" id="166214910"/>
<dbReference type="CPTAC" id="CPTAC-2806"/>
<dbReference type="CPTAC" id="CPTAC-2807"/>
<dbReference type="jPOST" id="P24863"/>
<dbReference type="MassIVE" id="P24863"/>
<dbReference type="PaxDb" id="9606-ENSP00000428982"/>
<dbReference type="PeptideAtlas" id="P24863"/>
<dbReference type="ProteomicsDB" id="54234">
    <molecule id="P24863-1"/>
</dbReference>
<dbReference type="ProteomicsDB" id="54235">
    <molecule id="P24863-2"/>
</dbReference>
<dbReference type="Pumba" id="P24863"/>
<dbReference type="Antibodypedia" id="4188">
    <property type="antibodies" value="345 antibodies from 32 providers"/>
</dbReference>
<dbReference type="DNASU" id="892"/>
<dbReference type="Ensembl" id="ENST00000520429.6">
    <molecule id="P24863-1"/>
    <property type="protein sequence ID" value="ENSP00000428982.1"/>
    <property type="gene ID" value="ENSG00000112237.13"/>
</dbReference>
<dbReference type="Ensembl" id="ENST00000523799.5">
    <molecule id="P24863-2"/>
    <property type="protein sequence ID" value="ENSP00000430014.1"/>
    <property type="gene ID" value="ENSG00000112237.13"/>
</dbReference>
<dbReference type="Ensembl" id="ENST00000523985.5">
    <molecule id="P24863-2"/>
    <property type="protein sequence ID" value="ENSP00000430119.1"/>
    <property type="gene ID" value="ENSG00000112237.13"/>
</dbReference>
<dbReference type="GeneID" id="892"/>
<dbReference type="KEGG" id="hsa:892"/>
<dbReference type="MANE-Select" id="ENST00000520429.6">
    <property type="protein sequence ID" value="ENSP00000428982.1"/>
    <property type="RefSeq nucleotide sequence ID" value="NM_005190.4"/>
    <property type="RefSeq protein sequence ID" value="NP_005181.2"/>
</dbReference>
<dbReference type="UCSC" id="uc003pqd.4">
    <molecule id="P24863-1"/>
    <property type="organism name" value="human"/>
</dbReference>
<dbReference type="AGR" id="HGNC:1581"/>
<dbReference type="CTD" id="892"/>
<dbReference type="DisGeNET" id="892"/>
<dbReference type="GeneCards" id="CCNC"/>
<dbReference type="HGNC" id="HGNC:1581">
    <property type="gene designation" value="CCNC"/>
</dbReference>
<dbReference type="HPA" id="ENSG00000112237">
    <property type="expression patterns" value="Low tissue specificity"/>
</dbReference>
<dbReference type="MIM" id="123838">
    <property type="type" value="gene"/>
</dbReference>
<dbReference type="neXtProt" id="NX_P24863"/>
<dbReference type="OpenTargets" id="ENSG00000112237"/>
<dbReference type="PharmGKB" id="PA26149"/>
<dbReference type="VEuPathDB" id="HostDB:ENSG00000112237"/>
<dbReference type="eggNOG" id="KOG0794">
    <property type="taxonomic scope" value="Eukaryota"/>
</dbReference>
<dbReference type="GeneTree" id="ENSGT00940000155625"/>
<dbReference type="InParanoid" id="P24863"/>
<dbReference type="OMA" id="CLLHPPH"/>
<dbReference type="OrthoDB" id="10266018at2759"/>
<dbReference type="PAN-GO" id="P24863">
    <property type="GO annotations" value="4 GO annotations based on evolutionary models"/>
</dbReference>
<dbReference type="PhylomeDB" id="P24863"/>
<dbReference type="PathwayCommons" id="P24863"/>
<dbReference type="Reactome" id="R-HSA-1989781">
    <property type="pathway name" value="PPARA activates gene expression"/>
</dbReference>
<dbReference type="Reactome" id="R-HSA-2122947">
    <property type="pathway name" value="NOTCH1 Intracellular Domain Regulates Transcription"/>
</dbReference>
<dbReference type="Reactome" id="R-HSA-212436">
    <property type="pathway name" value="Generic Transcription Pathway"/>
</dbReference>
<dbReference type="Reactome" id="R-HSA-2173796">
    <property type="pathway name" value="SMAD2/SMAD3:SMAD4 heterotrimer regulates transcription"/>
</dbReference>
<dbReference type="Reactome" id="R-HSA-2644606">
    <property type="pathway name" value="Constitutive Signaling by NOTCH1 PEST Domain Mutants"/>
</dbReference>
<dbReference type="Reactome" id="R-HSA-2894862">
    <property type="pathway name" value="Constitutive Signaling by NOTCH1 HD+PEST Domain Mutants"/>
</dbReference>
<dbReference type="Reactome" id="R-HSA-381340">
    <property type="pathway name" value="Transcriptional regulation of white adipocyte differentiation"/>
</dbReference>
<dbReference type="Reactome" id="R-HSA-9833110">
    <property type="pathway name" value="RSV-host interactions"/>
</dbReference>
<dbReference type="Reactome" id="R-HSA-9841922">
    <property type="pathway name" value="MLL4 and MLL3 complexes regulate expression of PPARG target genes in adipogenesis and hepatic steatosis"/>
</dbReference>
<dbReference type="SignaLink" id="P24863"/>
<dbReference type="SIGNOR" id="P24863"/>
<dbReference type="BioGRID-ORCS" id="892">
    <property type="hits" value="303 hits in 1183 CRISPR screens"/>
</dbReference>
<dbReference type="ChiTaRS" id="CCNC">
    <property type="organism name" value="human"/>
</dbReference>
<dbReference type="EvolutionaryTrace" id="P24863"/>
<dbReference type="GeneWiki" id="CCNC_(gene)"/>
<dbReference type="GenomeRNAi" id="892"/>
<dbReference type="Pharos" id="P24863">
    <property type="development level" value="Tbio"/>
</dbReference>
<dbReference type="PRO" id="PR:P24863"/>
<dbReference type="Proteomes" id="UP000005640">
    <property type="component" value="Chromosome 6"/>
</dbReference>
<dbReference type="RNAct" id="P24863">
    <property type="molecule type" value="protein"/>
</dbReference>
<dbReference type="Bgee" id="ENSG00000112237">
    <property type="expression patterns" value="Expressed in parotid gland and 209 other cell types or tissues"/>
</dbReference>
<dbReference type="ExpressionAtlas" id="P24863">
    <property type="expression patterns" value="baseline and differential"/>
</dbReference>
<dbReference type="GO" id="GO:1990508">
    <property type="term" value="C:CKM complex"/>
    <property type="evidence" value="ECO:0000353"/>
    <property type="project" value="ComplexPortal"/>
</dbReference>
<dbReference type="GO" id="GO:0000307">
    <property type="term" value="C:cyclin-dependent protein kinase holoenzyme complex"/>
    <property type="evidence" value="ECO:0000314"/>
    <property type="project" value="ComplexPortal"/>
</dbReference>
<dbReference type="GO" id="GO:0016592">
    <property type="term" value="C:mediator complex"/>
    <property type="evidence" value="ECO:0000318"/>
    <property type="project" value="GO_Central"/>
</dbReference>
<dbReference type="GO" id="GO:0005654">
    <property type="term" value="C:nucleoplasm"/>
    <property type="evidence" value="ECO:0000304"/>
    <property type="project" value="Reactome"/>
</dbReference>
<dbReference type="GO" id="GO:0005634">
    <property type="term" value="C:nucleus"/>
    <property type="evidence" value="ECO:0000318"/>
    <property type="project" value="GO_Central"/>
</dbReference>
<dbReference type="GO" id="GO:0016538">
    <property type="term" value="F:cyclin-dependent protein serine/threonine kinase regulator activity"/>
    <property type="evidence" value="ECO:0000318"/>
    <property type="project" value="GO_Central"/>
</dbReference>
<dbReference type="GO" id="GO:0042802">
    <property type="term" value="F:identical protein binding"/>
    <property type="evidence" value="ECO:0000353"/>
    <property type="project" value="IntAct"/>
</dbReference>
<dbReference type="GO" id="GO:0045023">
    <property type="term" value="P:G0 to G1 transition"/>
    <property type="evidence" value="ECO:0000314"/>
    <property type="project" value="ComplexPortal"/>
</dbReference>
<dbReference type="GO" id="GO:0045746">
    <property type="term" value="P:negative regulation of Notch signaling pathway"/>
    <property type="evidence" value="ECO:0000314"/>
    <property type="project" value="ComplexPortal"/>
</dbReference>
<dbReference type="GO" id="GO:0045944">
    <property type="term" value="P:positive regulation of transcription by RNA polymerase II"/>
    <property type="evidence" value="ECO:0000314"/>
    <property type="project" value="ComplexPortal"/>
</dbReference>
<dbReference type="CDD" id="cd20513">
    <property type="entry name" value="CYCLIN_CCNC_rpt1"/>
    <property type="match status" value="1"/>
</dbReference>
<dbReference type="CDD" id="cd20514">
    <property type="entry name" value="CYCLIN_CCNC_rpt2"/>
    <property type="match status" value="1"/>
</dbReference>
<dbReference type="FunFam" id="1.10.472.10:FF:000015">
    <property type="entry name" value="Putative cyclin-c"/>
    <property type="match status" value="1"/>
</dbReference>
<dbReference type="FunFam" id="1.10.472.10:FF:000017">
    <property type="entry name" value="Putative cyclin-c"/>
    <property type="match status" value="1"/>
</dbReference>
<dbReference type="Gene3D" id="1.10.472.10">
    <property type="entry name" value="Cyclin-like"/>
    <property type="match status" value="2"/>
</dbReference>
<dbReference type="InterPro" id="IPR013763">
    <property type="entry name" value="Cyclin-like_dom"/>
</dbReference>
<dbReference type="InterPro" id="IPR036915">
    <property type="entry name" value="Cyclin-like_sf"/>
</dbReference>
<dbReference type="InterPro" id="IPR043198">
    <property type="entry name" value="Cyclin/Ssn8"/>
</dbReference>
<dbReference type="InterPro" id="IPR031658">
    <property type="entry name" value="Cyclin_C_2"/>
</dbReference>
<dbReference type="InterPro" id="IPR006671">
    <property type="entry name" value="Cyclin_N"/>
</dbReference>
<dbReference type="PANTHER" id="PTHR10026">
    <property type="entry name" value="CYCLIN"/>
    <property type="match status" value="1"/>
</dbReference>
<dbReference type="Pfam" id="PF16899">
    <property type="entry name" value="Cyclin_C_2"/>
    <property type="match status" value="1"/>
</dbReference>
<dbReference type="Pfam" id="PF00134">
    <property type="entry name" value="Cyclin_N"/>
    <property type="match status" value="1"/>
</dbReference>
<dbReference type="PIRSF" id="PIRSF028758">
    <property type="entry name" value="Cyclin, C/H/G types"/>
    <property type="match status" value="1"/>
</dbReference>
<dbReference type="SMART" id="SM00385">
    <property type="entry name" value="CYCLIN"/>
    <property type="match status" value="2"/>
</dbReference>
<dbReference type="SUPFAM" id="SSF47954">
    <property type="entry name" value="Cyclin-like"/>
    <property type="match status" value="2"/>
</dbReference>
<keyword id="KW-0002">3D-structure</keyword>
<keyword id="KW-0010">Activator</keyword>
<keyword id="KW-0025">Alternative splicing</keyword>
<keyword id="KW-0195">Cyclin</keyword>
<keyword id="KW-0539">Nucleus</keyword>
<keyword id="KW-0597">Phosphoprotein</keyword>
<keyword id="KW-1267">Proteomics identification</keyword>
<keyword id="KW-1185">Reference proteome</keyword>
<keyword id="KW-0678">Repressor</keyword>
<keyword id="KW-0804">Transcription</keyword>
<keyword id="KW-0805">Transcription regulation</keyword>
<sequence>MAGNFWQSSHYLQWILDKQDLLKERQKDLKFLSEEEYWKLQIFFTNVIQALGEHLKLRQQVIATATVYFKRFYARYSLKSIDPVLMAPTCVFLASKVEEFGVVSNTRLIAAATSVLKTRFSYAFPKEFPYRMNHILECEFYLLELMDCCLIVYHPYRPLLQYVQDMGQEDMLLPLAWRIVNDTYRTDLCLLYPPFMIALACLHVACVVQQKDARQWFAELSVDMEKILEIIRVILKLYEQWKNFDERKEMATILSKMPKPKPPPNSEGEQGPNGSQNSSYSQS</sequence>
<accession>P24863</accession>
<accession>B4DPZ1</accession>
<accession>Q9H543</accession>
<name>CCNC_HUMAN</name>
<evidence type="ECO:0000256" key="1">
    <source>
        <dbReference type="SAM" id="MobiDB-lite"/>
    </source>
</evidence>
<evidence type="ECO:0000269" key="2">
    <source>
    </source>
</evidence>
<evidence type="ECO:0000269" key="3">
    <source>
    </source>
</evidence>
<evidence type="ECO:0000269" key="4">
    <source>
    </source>
</evidence>
<evidence type="ECO:0000269" key="5">
    <source>
    </source>
</evidence>
<evidence type="ECO:0000269" key="6">
    <source>
    </source>
</evidence>
<evidence type="ECO:0000269" key="7">
    <source>
    </source>
</evidence>
<evidence type="ECO:0000303" key="8">
    <source>
    </source>
</evidence>
<evidence type="ECO:0000305" key="9"/>
<evidence type="ECO:0007744" key="10">
    <source>
    </source>
</evidence>
<evidence type="ECO:0007829" key="11">
    <source>
        <dbReference type="PDB" id="4F6U"/>
    </source>
</evidence>
<evidence type="ECO:0007829" key="12">
    <source>
        <dbReference type="PDB" id="4F7S"/>
    </source>
</evidence>
<evidence type="ECO:0007829" key="13">
    <source>
        <dbReference type="PDB" id="5HBE"/>
    </source>
</evidence>
<evidence type="ECO:0007829" key="14">
    <source>
        <dbReference type="PDB" id="5XS2"/>
    </source>
</evidence>
<protein>
    <recommendedName>
        <fullName>Cyclin-C</fullName>
    </recommendedName>
    <alternativeName>
        <fullName>SRB11 homolog</fullName>
        <shortName>hSRB11</shortName>
    </alternativeName>
</protein>
<gene>
    <name type="primary">CCNC</name>
</gene>
<comment type="function">
    <text evidence="4 6">Component of the Mediator complex, a coactivator involved in regulated gene transcription of nearly all RNA polymerase II-dependent genes. Mediator functions as a bridge to convey information from gene-specific regulatory proteins to the basal RNA polymerase II transcription machinery. Mediator is recruited to promoters by direct interactions with regulatory proteins and serves as a scaffold for the assembly of a functional preinitiation complex with RNA polymerase II and the general transcription factors. Binds to and activates cyclin-dependent kinase CDK8 that phosphorylates the CTD (C-terminal domain) of the large subunit of RNA polymerase II (RNAp II), which may inhibit the formation of a transcription initiation complex.</text>
</comment>
<comment type="subunit">
    <text evidence="2 3 5 7">Component of the Mediator complex, which is composed of MED1, MED4, MED6, MED7, MED8, MED9, MED10, MED11, MED12, MED13, MED13L, MED14, MED15, MED16, MED17, MED18, MED19, MED20, MED21, MED22, MED23, MED24, MED25, MED26, MED27, MED29, MED30, MED31, CCNC, CDK8 and CDC2L6/CDK11. The MED12, MED13, CCNC and CDK8 subunits form a distinct module termed the CDK8 module. Mediator containing the CDK8 module is less active than Mediator lacking this module in supporting transcriptional activation. Individual preparations of the Mediator complex lacking one or more distinct subunits have been variously termed ARC, CRSP, DRIP, PC2, SMCC and TRAP. The cylin/CDK pair formed by CCNC/CDK8 also associates with the large subunit of RNA polymerase II.</text>
</comment>
<comment type="interaction">
    <interactant intactId="EBI-395261">
        <id>P24863</id>
    </interactant>
    <interactant intactId="EBI-21535880">
        <id>Q92870-2</id>
        <label>APBB2</label>
    </interactant>
    <organismsDiffer>false</organismsDiffer>
    <experiments>3</experiments>
</comment>
<comment type="interaction">
    <interactant intactId="EBI-395261">
        <id>P24863</id>
    </interactant>
    <interactant intactId="EBI-540797">
        <id>Q9UBL3</id>
        <label>ASH2L</label>
    </interactant>
    <organismsDiffer>false</organismsDiffer>
    <experiments>3</experiments>
</comment>
<comment type="interaction">
    <interactant intactId="EBI-395261">
        <id>P24863</id>
    </interactant>
    <interactant intactId="EBI-465872">
        <id>Q6QNY1</id>
        <label>BLOC1S2</label>
    </interactant>
    <organismsDiffer>false</organismsDiffer>
    <experiments>3</experiments>
</comment>
<comment type="interaction">
    <interactant intactId="EBI-395261">
        <id>P24863</id>
    </interactant>
    <interactant intactId="EBI-710091">
        <id>Q9BX70</id>
        <label>BTBD2</label>
    </interactant>
    <organismsDiffer>false</organismsDiffer>
    <experiments>3</experiments>
</comment>
<comment type="interaction">
    <interactant intactId="EBI-395261">
        <id>P24863</id>
    </interactant>
    <interactant intactId="EBI-718729">
        <id>P55212</id>
        <label>CASP6</label>
    </interactant>
    <organismsDiffer>false</organismsDiffer>
    <experiments>3</experiments>
</comment>
<comment type="interaction">
    <interactant intactId="EBI-395261">
        <id>P24863</id>
    </interactant>
    <interactant intactId="EBI-10175300">
        <id>Q8TD31-3</id>
        <label>CCHCR1</label>
    </interactant>
    <organismsDiffer>false</organismsDiffer>
    <experiments>3</experiments>
</comment>
<comment type="interaction">
    <interactant intactId="EBI-395261">
        <id>P24863</id>
    </interactant>
    <interactant intactId="EBI-395261">
        <id>P24863</id>
        <label>CCNC</label>
    </interactant>
    <organismsDiffer>false</organismsDiffer>
    <experiments>3</experiments>
</comment>
<comment type="interaction">
    <interactant intactId="EBI-395261">
        <id>P24863</id>
    </interactant>
    <interactant intactId="EBI-1245761">
        <id>Q00526</id>
        <label>CDK3</label>
    </interactant>
    <organismsDiffer>false</organismsDiffer>
    <experiments>7</experiments>
</comment>
<comment type="interaction">
    <interactant intactId="EBI-395261">
        <id>P24863</id>
    </interactant>
    <interactant intactId="EBI-1041567">
        <id>Q00535</id>
        <label>CDK5</label>
    </interactant>
    <organismsDiffer>false</organismsDiffer>
    <experiments>2</experiments>
</comment>
<comment type="interaction">
    <interactant intactId="EBI-395261">
        <id>P24863</id>
    </interactant>
    <interactant intactId="EBI-394377">
        <id>P49336</id>
        <label>CDK8</label>
    </interactant>
    <organismsDiffer>false</organismsDiffer>
    <experiments>40</experiments>
</comment>
<comment type="interaction">
    <interactant intactId="EBI-395261">
        <id>P24863</id>
    </interactant>
    <interactant intactId="EBI-711280">
        <id>P42772</id>
        <label>CDKN2B</label>
    </interactant>
    <organismsDiffer>false</organismsDiffer>
    <experiments>3</experiments>
</comment>
<comment type="interaction">
    <interactant intactId="EBI-395261">
        <id>P24863</id>
    </interactant>
    <interactant intactId="EBI-742422">
        <id>Q96M91</id>
        <label>CFAP53</label>
    </interactant>
    <organismsDiffer>false</organismsDiffer>
    <experiments>3</experiments>
</comment>
<comment type="interaction">
    <interactant intactId="EBI-395261">
        <id>P24863</id>
    </interactant>
    <interactant intactId="EBI-456371">
        <id>P61024</id>
        <label>CKS1B</label>
    </interactant>
    <organismsDiffer>false</organismsDiffer>
    <experiments>3</experiments>
</comment>
<comment type="interaction">
    <interactant intactId="EBI-395261">
        <id>P24863</id>
    </interactant>
    <interactant intactId="EBI-748171">
        <id>O43186</id>
        <label>CRX</label>
    </interactant>
    <organismsDiffer>false</organismsDiffer>
    <experiments>4</experiments>
</comment>
<comment type="interaction">
    <interactant intactId="EBI-395261">
        <id>P24863</id>
    </interactant>
    <interactant intactId="EBI-740680">
        <id>Q8WWB3</id>
        <label>DYDC1</label>
    </interactant>
    <organismsDiffer>false</organismsDiffer>
    <experiments>3</experiments>
</comment>
<comment type="interaction">
    <interactant intactId="EBI-395261">
        <id>P24863</id>
    </interactant>
    <interactant intactId="EBI-719941">
        <id>Q3B820</id>
        <label>FAM161A</label>
    </interactant>
    <organismsDiffer>false</organismsDiffer>
    <experiments>3</experiments>
</comment>
<comment type="interaction">
    <interactant intactId="EBI-395261">
        <id>P24863</id>
    </interactant>
    <interactant intactId="EBI-742802">
        <id>Q9Y247</id>
        <label>FAM50B</label>
    </interactant>
    <organismsDiffer>false</organismsDiffer>
    <experiments>3</experiments>
</comment>
<comment type="interaction">
    <interactant intactId="EBI-395261">
        <id>P24863</id>
    </interactant>
    <interactant intactId="EBI-6658203">
        <id>Q86YD7</id>
        <label>FAM90A1</label>
    </interactant>
    <organismsDiffer>false</organismsDiffer>
    <experiments>3</experiments>
</comment>
<comment type="interaction">
    <interactant intactId="EBI-395261">
        <id>P24863</id>
    </interactant>
    <interactant intactId="EBI-983612">
        <id>O15409</id>
        <label>FOXP2</label>
    </interactant>
    <organismsDiffer>false</organismsDiffer>
    <experiments>3</experiments>
</comment>
<comment type="interaction">
    <interactant intactId="EBI-395261">
        <id>P24863</id>
    </interactant>
    <interactant intactId="EBI-8468543">
        <id>Q6PJQ5</id>
        <label>FOXR2</label>
    </interactant>
    <organismsDiffer>false</organismsDiffer>
    <experiments>3</experiments>
</comment>
<comment type="interaction">
    <interactant intactId="EBI-395261">
        <id>P24863</id>
    </interactant>
    <interactant intactId="EBI-372506">
        <id>Q8TAE8</id>
        <label>GADD45GIP1</label>
    </interactant>
    <organismsDiffer>false</organismsDiffer>
    <experiments>3</experiments>
</comment>
<comment type="interaction">
    <interactant intactId="EBI-395261">
        <id>P24863</id>
    </interactant>
    <interactant intactId="EBI-744302">
        <id>P14136</id>
        <label>GFAP</label>
    </interactant>
    <organismsDiffer>false</organismsDiffer>
    <experiments>3</experiments>
</comment>
<comment type="interaction">
    <interactant intactId="EBI-395261">
        <id>P24863</id>
    </interactant>
    <interactant intactId="EBI-1955541">
        <id>Q53GS7</id>
        <label>GLE1</label>
    </interactant>
    <organismsDiffer>false</organismsDiffer>
    <experiments>3</experiments>
</comment>
<comment type="interaction">
    <interactant intactId="EBI-395261">
        <id>P24863</id>
    </interactant>
    <interactant intactId="EBI-2804292">
        <id>Q49A26</id>
        <label>GLYR1</label>
    </interactant>
    <organismsDiffer>false</organismsDiffer>
    <experiments>3</experiments>
</comment>
<comment type="interaction">
    <interactant intactId="EBI-395261">
        <id>P24863</id>
    </interactant>
    <interactant intactId="EBI-618309">
        <id>Q08379</id>
        <label>GOLGA2</label>
    </interactant>
    <organismsDiffer>false</organismsDiffer>
    <experiments>3</experiments>
</comment>
<comment type="interaction">
    <interactant intactId="EBI-395261">
        <id>P24863</id>
    </interactant>
    <interactant intactId="EBI-466029">
        <id>P42858</id>
        <label>HTT</label>
    </interactant>
    <organismsDiffer>false</organismsDiffer>
    <experiments>9</experiments>
</comment>
<comment type="interaction">
    <interactant intactId="EBI-395261">
        <id>P24863</id>
    </interactant>
    <interactant intactId="EBI-2557660">
        <id>Q9ULR0</id>
        <label>ISY1</label>
    </interactant>
    <organismsDiffer>false</organismsDiffer>
    <experiments>3</experiments>
</comment>
<comment type="interaction">
    <interactant intactId="EBI-395261">
        <id>P24863</id>
    </interactant>
    <interactant intactId="EBI-10171552">
        <id>A1A4E9</id>
        <label>KRT13</label>
    </interactant>
    <organismsDiffer>false</organismsDiffer>
    <experiments>3</experiments>
</comment>
<comment type="interaction">
    <interactant intactId="EBI-395261">
        <id>P24863</id>
    </interactant>
    <interactant intactId="EBI-739566">
        <id>P19012</id>
        <label>KRT15</label>
    </interactant>
    <organismsDiffer>false</organismsDiffer>
    <experiments>3</experiments>
</comment>
<comment type="interaction">
    <interactant intactId="EBI-395261">
        <id>P24863</id>
    </interactant>
    <interactant intactId="EBI-356410">
        <id>P08779</id>
        <label>KRT16</label>
    </interactant>
    <organismsDiffer>false</organismsDiffer>
    <experiments>3</experiments>
</comment>
<comment type="interaction">
    <interactant intactId="EBI-395261">
        <id>P24863</id>
    </interactant>
    <interactant intactId="EBI-3044087">
        <id>Q7Z3Y8</id>
        <label>KRT27</label>
    </interactant>
    <organismsDiffer>false</organismsDiffer>
    <experiments>3</experiments>
</comment>
<comment type="interaction">
    <interactant intactId="EBI-395261">
        <id>P24863</id>
    </interactant>
    <interactant intactId="EBI-948001">
        <id>Q15323</id>
        <label>KRT31</label>
    </interactant>
    <organismsDiffer>false</organismsDiffer>
    <experiments>6</experiments>
</comment>
<comment type="interaction">
    <interactant intactId="EBI-395261">
        <id>P24863</id>
    </interactant>
    <interactant intactId="EBI-1047093">
        <id>O76011</id>
        <label>KRT34</label>
    </interactant>
    <organismsDiffer>false</organismsDiffer>
    <experiments>3</experiments>
</comment>
<comment type="interaction">
    <interactant intactId="EBI-395261">
        <id>P24863</id>
    </interactant>
    <interactant intactId="EBI-21591415">
        <id>P13473-2</id>
        <label>LAMP2</label>
    </interactant>
    <organismsDiffer>false</organismsDiffer>
    <experiments>3</experiments>
</comment>
<comment type="interaction">
    <interactant intactId="EBI-395261">
        <id>P24863</id>
    </interactant>
    <interactant intactId="EBI-11911016">
        <id>P80188</id>
        <label>LCN2</label>
    </interactant>
    <organismsDiffer>false</organismsDiffer>
    <experiments>4</experiments>
</comment>
<comment type="interaction">
    <interactant intactId="EBI-395261">
        <id>P24863</id>
    </interactant>
    <interactant intactId="EBI-741037">
        <id>Q9BRK4</id>
        <label>LZTS2</label>
    </interactant>
    <organismsDiffer>false</organismsDiffer>
    <experiments>3</experiments>
</comment>
<comment type="interaction">
    <interactant intactId="EBI-395261">
        <id>P24863</id>
    </interactant>
    <interactant intactId="EBI-11978579">
        <id>O95983-2</id>
        <label>MBD3</label>
    </interactant>
    <organismsDiffer>false</organismsDiffer>
    <experiments>3</experiments>
</comment>
<comment type="interaction">
    <interactant intactId="EBI-395261">
        <id>P24863</id>
    </interactant>
    <interactant intactId="EBI-10182361">
        <id>Q9NS73-5</id>
        <label>MBIP</label>
    </interactant>
    <organismsDiffer>false</organismsDiffer>
    <experiments>3</experiments>
</comment>
<comment type="interaction">
    <interactant intactId="EBI-395261">
        <id>P24863</id>
    </interactant>
    <interactant intactId="EBI-748397">
        <id>P50222</id>
        <label>MEOX2</label>
    </interactant>
    <organismsDiffer>false</organismsDiffer>
    <experiments>3</experiments>
</comment>
<comment type="interaction">
    <interactant intactId="EBI-395261">
        <id>P24863</id>
    </interactant>
    <interactant intactId="EBI-16439278">
        <id>Q6FHY5</id>
        <label>MEOX2</label>
    </interactant>
    <organismsDiffer>false</organismsDiffer>
    <experiments>3</experiments>
</comment>
<comment type="interaction">
    <interactant intactId="EBI-395261">
        <id>P24863</id>
    </interactant>
    <interactant intactId="EBI-724754">
        <id>O14880</id>
        <label>MGST3</label>
    </interactant>
    <organismsDiffer>false</organismsDiffer>
    <experiments>3</experiments>
</comment>
<comment type="interaction">
    <interactant intactId="EBI-395261">
        <id>P24863</id>
    </interactant>
    <interactant intactId="EBI-7950783">
        <id>Q96JP2</id>
        <label>MYO15B</label>
    </interactant>
    <organismsDiffer>false</organismsDiffer>
    <experiments>3</experiments>
</comment>
<comment type="interaction">
    <interactant intactId="EBI-395261">
        <id>P24863</id>
    </interactant>
    <interactant intactId="EBI-1246238">
        <id>P17568</id>
        <label>NDUFB7</label>
    </interactant>
    <organismsDiffer>false</organismsDiffer>
    <experiments>3</experiments>
</comment>
<comment type="interaction">
    <interactant intactId="EBI-395261">
        <id>P24863</id>
    </interactant>
    <interactant intactId="EBI-713665">
        <id>P19404</id>
        <label>NDUFV2</label>
    </interactant>
    <organismsDiffer>false</organismsDiffer>
    <experiments>7</experiments>
</comment>
<comment type="interaction">
    <interactant intactId="EBI-395261">
        <id>P24863</id>
    </interactant>
    <interactant intactId="EBI-10178578">
        <id>I6L9F6</id>
        <label>NEFL</label>
    </interactant>
    <organismsDiffer>false</organismsDiffer>
    <experiments>3</experiments>
</comment>
<comment type="interaction">
    <interactant intactId="EBI-395261">
        <id>P24863</id>
    </interactant>
    <interactant intactId="EBI-3917542">
        <id>Q9HAN9</id>
        <label>NMNAT1</label>
    </interactant>
    <organismsDiffer>false</organismsDiffer>
    <experiments>4</experiments>
</comment>
<comment type="interaction">
    <interactant intactId="EBI-395261">
        <id>P24863</id>
    </interactant>
    <interactant intactId="EBI-2362014">
        <id>Q96F24</id>
        <label>NRBF2</label>
    </interactant>
    <organismsDiffer>false</organismsDiffer>
    <experiments>3</experiments>
</comment>
<comment type="interaction">
    <interactant intactId="EBI-395261">
        <id>P24863</id>
    </interactant>
    <interactant intactId="EBI-296331">
        <id>Q02548</id>
        <label>PAX5</label>
    </interactant>
    <organismsDiffer>false</organismsDiffer>
    <experiments>3</experiments>
</comment>
<comment type="interaction">
    <interactant intactId="EBI-395261">
        <id>P24863</id>
    </interactant>
    <interactant intactId="EBI-740845">
        <id>Q96AQ6</id>
        <label>PBXIP1</label>
    </interactant>
    <organismsDiffer>false</organismsDiffer>
    <experiments>5</experiments>
</comment>
<comment type="interaction">
    <interactant intactId="EBI-395261">
        <id>P24863</id>
    </interactant>
    <interactant intactId="EBI-12905986">
        <id>Q8TD55-2</id>
        <label>PLEKHO2</label>
    </interactant>
    <organismsDiffer>false</organismsDiffer>
    <experiments>3</experiments>
</comment>
<comment type="interaction">
    <interactant intactId="EBI-395261">
        <id>P24863</id>
    </interactant>
    <interactant intactId="EBI-725795">
        <id>O60664</id>
        <label>PLIN3</label>
    </interactant>
    <organismsDiffer>false</organismsDiffer>
    <experiments>3</experiments>
</comment>
<comment type="interaction">
    <interactant intactId="EBI-395261">
        <id>P24863</id>
    </interactant>
    <interactant intactId="EBI-50433196">
        <id>A0A6Q8PF08</id>
        <label>PMP22</label>
    </interactant>
    <organismsDiffer>false</organismsDiffer>
    <experiments>3</experiments>
</comment>
<comment type="interaction">
    <interactant intactId="EBI-395261">
        <id>P24863</id>
    </interactant>
    <interactant intactId="EBI-10171633">
        <id>Q96PV4</id>
        <label>PNMA5</label>
    </interactant>
    <organismsDiffer>false</organismsDiffer>
    <experiments>4</experiments>
</comment>
<comment type="interaction">
    <interactant intactId="EBI-395261">
        <id>P24863</id>
    </interactant>
    <interactant intactId="EBI-12029004">
        <id>P78424</id>
        <label>POU6F2</label>
    </interactant>
    <organismsDiffer>false</organismsDiffer>
    <experiments>3</experiments>
</comment>
<comment type="interaction">
    <interactant intactId="EBI-395261">
        <id>P24863</id>
    </interactant>
    <interactant intactId="EBI-2798416">
        <id>Q99633</id>
        <label>PRPF18</label>
    </interactant>
    <organismsDiffer>false</organismsDiffer>
    <experiments>3</experiments>
</comment>
<comment type="interaction">
    <interactant intactId="EBI-395261">
        <id>P24863</id>
    </interactant>
    <interactant intactId="EBI-5280197">
        <id>O75400-2</id>
        <label>PRPF40A</label>
    </interactant>
    <organismsDiffer>false</organismsDiffer>
    <experiments>3</experiments>
</comment>
<comment type="interaction">
    <interactant intactId="EBI-395261">
        <id>P24863</id>
    </interactant>
    <interactant intactId="EBI-1053259">
        <id>Q9UHX1</id>
        <label>PUF60</label>
    </interactant>
    <organismsDiffer>false</organismsDiffer>
    <experiments>3</experiments>
</comment>
<comment type="interaction">
    <interactant intactId="EBI-395261">
        <id>P24863</id>
    </interactant>
    <interactant intactId="EBI-491274">
        <id>P06400</id>
        <label>RB1</label>
    </interactant>
    <organismsDiffer>false</organismsDiffer>
    <experiments>4</experiments>
</comment>
<comment type="interaction">
    <interactant intactId="EBI-395261">
        <id>P24863</id>
    </interactant>
    <interactant intactId="EBI-740773">
        <id>Q96IZ5</id>
        <label>RBM41</label>
    </interactant>
    <organismsDiffer>false</organismsDiffer>
    <experiments>3</experiments>
</comment>
<comment type="interaction">
    <interactant intactId="EBI-395261">
        <id>P24863</id>
    </interactant>
    <interactant intactId="EBI-10829018">
        <id>Q04864-2</id>
        <label>REL</label>
    </interactant>
    <organismsDiffer>false</organismsDiffer>
    <experiments>3</experiments>
</comment>
<comment type="interaction">
    <interactant intactId="EBI-395261">
        <id>P24863</id>
    </interactant>
    <interactant intactId="EBI-712376">
        <id>P40937</id>
        <label>RFC5</label>
    </interactant>
    <organismsDiffer>false</organismsDiffer>
    <experiments>5</experiments>
</comment>
<comment type="interaction">
    <interactant intactId="EBI-395261">
        <id>P24863</id>
    </interactant>
    <interactant intactId="EBI-10265323">
        <id>Q8N443</id>
        <label>RIBC1</label>
    </interactant>
    <organismsDiffer>false</organismsDiffer>
    <experiments>5</experiments>
</comment>
<comment type="interaction">
    <interactant intactId="EBI-395261">
        <id>P24863</id>
    </interactant>
    <interactant intactId="EBI-621404">
        <id>P15927</id>
        <label>RPA2</label>
    </interactant>
    <organismsDiffer>false</organismsDiffer>
    <experiments>3</experiments>
</comment>
<comment type="interaction">
    <interactant intactId="EBI-395261">
        <id>P24863</id>
    </interactant>
    <interactant intactId="EBI-6257312">
        <id>Q9BVN2</id>
        <label>RUSC1</label>
    </interactant>
    <organismsDiffer>false</organismsDiffer>
    <experiments>3</experiments>
</comment>
<comment type="interaction">
    <interactant intactId="EBI-395261">
        <id>P24863</id>
    </interactant>
    <interactant intactId="EBI-748621">
        <id>Q9UJW9</id>
        <label>SERTAD3</label>
    </interactant>
    <organismsDiffer>false</organismsDiffer>
    <experiments>3</experiments>
</comment>
<comment type="interaction">
    <interactant intactId="EBI-395261">
        <id>P24863</id>
    </interactant>
    <interactant intactId="EBI-2623095">
        <id>Q9Y371</id>
        <label>SH3GLB1</label>
    </interactant>
    <organismsDiffer>false</organismsDiffer>
    <experiments>3</experiments>
</comment>
<comment type="interaction">
    <interactant intactId="EBI-395261">
        <id>P24863</id>
    </interactant>
    <interactant intactId="EBI-79084">
        <id>Q92529</id>
        <label>SHC3</label>
    </interactant>
    <organismsDiffer>false</organismsDiffer>
    <experiments>3</experiments>
</comment>
<comment type="interaction">
    <interactant intactId="EBI-395261">
        <id>P24863</id>
    </interactant>
    <interactant intactId="EBI-11959123">
        <id>Q99932-2</id>
        <label>SPAG8</label>
    </interactant>
    <organismsDiffer>false</organismsDiffer>
    <experiments>3</experiments>
</comment>
<comment type="interaction">
    <interactant intactId="EBI-395261">
        <id>P24863</id>
    </interactant>
    <interactant intactId="EBI-5235340">
        <id>Q7Z699</id>
        <label>SPRED1</label>
    </interactant>
    <organismsDiffer>false</organismsDiffer>
    <experiments>3</experiments>
</comment>
<comment type="interaction">
    <interactant intactId="EBI-395261">
        <id>P24863</id>
    </interactant>
    <interactant intactId="EBI-12029182">
        <id>Q6ZRS2-3</id>
        <label>SRCAP</label>
    </interactant>
    <organismsDiffer>false</organismsDiffer>
    <experiments>3</experiments>
</comment>
<comment type="interaction">
    <interactant intactId="EBI-395261">
        <id>P24863</id>
    </interactant>
    <interactant intactId="EBI-473249">
        <id>O75528</id>
        <label>TADA3</label>
    </interactant>
    <organismsDiffer>false</organismsDiffer>
    <experiments>3</experiments>
</comment>
<comment type="interaction">
    <interactant intactId="EBI-395261">
        <id>P24863</id>
    </interactant>
    <interactant intactId="EBI-11955057">
        <id>Q8N8B7-2</id>
        <label>TCEANC</label>
    </interactant>
    <organismsDiffer>false</organismsDiffer>
    <experiments>3</experiments>
</comment>
<comment type="interaction">
    <interactant intactId="EBI-395261">
        <id>P24863</id>
    </interactant>
    <interactant intactId="EBI-11139477">
        <id>Q96N21</id>
        <label>TEPSIN</label>
    </interactant>
    <organismsDiffer>false</organismsDiffer>
    <experiments>3</experiments>
</comment>
<comment type="interaction">
    <interactant intactId="EBI-395261">
        <id>P24863</id>
    </interactant>
    <interactant intactId="EBI-12090309">
        <id>Q9BXU0</id>
        <label>TEX12</label>
    </interactant>
    <organismsDiffer>false</organismsDiffer>
    <experiments>3</experiments>
</comment>
<comment type="interaction">
    <interactant intactId="EBI-395261">
        <id>P24863</id>
    </interactant>
    <interactant intactId="EBI-765817">
        <id>Q9Y228</id>
        <label>TRAF3IP3</label>
    </interactant>
    <organismsDiffer>false</organismsDiffer>
    <experiments>3</experiments>
</comment>
<comment type="interaction">
    <interactant intactId="EBI-395261">
        <id>P24863</id>
    </interactant>
    <interactant intactId="EBI-739510">
        <id>Q9HCM9</id>
        <label>TRIM39</label>
    </interactant>
    <organismsDiffer>false</organismsDiffer>
    <experiments>4</experiments>
</comment>
<comment type="interaction">
    <interactant intactId="EBI-395261">
        <id>P24863</id>
    </interactant>
    <interactant intactId="EBI-473850">
        <id>P61086</id>
        <label>UBE2K</label>
    </interactant>
    <organismsDiffer>false</organismsDiffer>
    <experiments>3</experiments>
</comment>
<comment type="interaction">
    <interactant intactId="EBI-395261">
        <id>P24863</id>
    </interactant>
    <interactant intactId="EBI-12157263">
        <id>P40337-2</id>
        <label>VHL</label>
    </interactant>
    <organismsDiffer>false</organismsDiffer>
    <experiments>3</experiments>
</comment>
<comment type="interaction">
    <interactant intactId="EBI-395261">
        <id>P24863</id>
    </interactant>
    <interactant intactId="EBI-740160">
        <id>Q9NP79</id>
        <label>VTA1</label>
    </interactant>
    <organismsDiffer>false</organismsDiffer>
    <experiments>3</experiments>
</comment>
<comment type="interaction">
    <interactant intactId="EBI-395261">
        <id>P24863</id>
    </interactant>
    <interactant intactId="EBI-11419867">
        <id>Q8TF47</id>
        <label>ZFP90</label>
    </interactant>
    <organismsDiffer>false</organismsDiffer>
    <experiments>3</experiments>
</comment>
<comment type="interaction">
    <interactant intactId="EBI-395261">
        <id>P24863</id>
    </interactant>
    <interactant intactId="EBI-8648067">
        <id>P17022</id>
        <label>ZNF18</label>
    </interactant>
    <organismsDiffer>false</organismsDiffer>
    <experiments>4</experiments>
</comment>
<comment type="interaction">
    <interactant intactId="EBI-395261">
        <id>P24863</id>
    </interactant>
    <interactant intactId="EBI-743265">
        <id>Q9BUY5</id>
        <label>ZNF426</label>
    </interactant>
    <organismsDiffer>false</organismsDiffer>
    <experiments>3</experiments>
</comment>
<comment type="interaction">
    <interactant intactId="EBI-395261">
        <id>P24863</id>
    </interactant>
    <interactant intactId="EBI-4395669">
        <id>Q6ZNG0</id>
        <label>ZNF620</label>
    </interactant>
    <organismsDiffer>false</organismsDiffer>
    <experiments>3</experiments>
</comment>
<comment type="interaction">
    <interactant intactId="EBI-395261">
        <id>P24863</id>
    </interactant>
    <interactant intactId="EBI-4395732">
        <id>P0C7X2</id>
        <label>ZNF688</label>
    </interactant>
    <organismsDiffer>false</organismsDiffer>
    <experiments>3</experiments>
</comment>
<comment type="interaction">
    <interactant intactId="EBI-395261">
        <id>P24863</id>
    </interactant>
    <interactant intactId="EBI-10240849">
        <id>Q3KQV3</id>
        <label>ZNF792</label>
    </interactant>
    <organismsDiffer>false</organismsDiffer>
    <experiments>3</experiments>
</comment>
<comment type="subcellular location">
    <subcellularLocation>
        <location evidence="9">Nucleus</location>
    </subcellularLocation>
</comment>
<comment type="alternative products">
    <event type="alternative splicing"/>
    <isoform>
        <id>P24863-1</id>
        <name>1</name>
        <sequence type="displayed"/>
    </isoform>
    <isoform>
        <id>P24863-2</id>
        <name>2</name>
        <sequence type="described" ref="VSP_043075"/>
    </isoform>
</comment>
<comment type="tissue specificity">
    <text>Highest levels in pancreas. High levels in heart, liver, skeletal muscle and kidney. Low levels in brain.</text>
</comment>
<comment type="similarity">
    <text evidence="9">Belongs to the cyclin family. Cyclin C subfamily.</text>
</comment>
<comment type="sequence caution" evidence="9">
    <conflict type="erroneous initiation">
        <sequence resource="EMBL-CDS" id="AAC50825"/>
    </conflict>
</comment>
<proteinExistence type="evidence at protein level"/>
<feature type="chain" id="PRO_0000080420" description="Cyclin-C">
    <location>
        <begin position="1"/>
        <end position="283"/>
    </location>
</feature>
<feature type="domain" description="Cyclin N-terminal">
    <location>
        <begin position="46"/>
        <end position="144"/>
    </location>
</feature>
<feature type="region of interest" description="Disordered" evidence="1">
    <location>
        <begin position="252"/>
        <end position="283"/>
    </location>
</feature>
<feature type="compositionally biased region" description="Polar residues" evidence="1">
    <location>
        <begin position="272"/>
        <end position="283"/>
    </location>
</feature>
<feature type="modified residue" description="Phosphoserine" evidence="10">
    <location>
        <position position="275"/>
    </location>
</feature>
<feature type="splice variant" id="VSP_043075" description="In isoform 2." evidence="8">
    <location>
        <begin position="1"/>
        <end position="85"/>
    </location>
</feature>
<feature type="turn" evidence="11">
    <location>
        <begin position="1"/>
        <end position="3"/>
    </location>
</feature>
<feature type="helix" evidence="14">
    <location>
        <begin position="5"/>
        <end position="7"/>
    </location>
</feature>
<feature type="helix" evidence="14">
    <location>
        <begin position="9"/>
        <end position="13"/>
    </location>
</feature>
<feature type="helix" evidence="14">
    <location>
        <begin position="18"/>
        <end position="25"/>
    </location>
</feature>
<feature type="turn" evidence="14">
    <location>
        <begin position="26"/>
        <end position="31"/>
    </location>
</feature>
<feature type="helix" evidence="14">
    <location>
        <begin position="34"/>
        <end position="54"/>
    </location>
</feature>
<feature type="helix" evidence="14">
    <location>
        <begin position="59"/>
        <end position="75"/>
    </location>
</feature>
<feature type="turn" evidence="14">
    <location>
        <begin position="78"/>
        <end position="80"/>
    </location>
</feature>
<feature type="helix" evidence="14">
    <location>
        <begin position="83"/>
        <end position="97"/>
    </location>
</feature>
<feature type="strand" evidence="13">
    <location>
        <begin position="98"/>
        <end position="100"/>
    </location>
</feature>
<feature type="helix" evidence="14">
    <location>
        <begin position="105"/>
        <end position="119"/>
    </location>
</feature>
<feature type="turn" evidence="14">
    <location>
        <begin position="121"/>
        <end position="123"/>
    </location>
</feature>
<feature type="helix" evidence="14">
    <location>
        <begin position="132"/>
        <end position="145"/>
    </location>
</feature>
<feature type="turn" evidence="14">
    <location>
        <begin position="146"/>
        <end position="148"/>
    </location>
</feature>
<feature type="helix" evidence="14">
    <location>
        <begin position="156"/>
        <end position="166"/>
    </location>
</feature>
<feature type="helix" evidence="14">
    <location>
        <begin position="169"/>
        <end position="183"/>
    </location>
</feature>
<feature type="turn" evidence="12">
    <location>
        <begin position="184"/>
        <end position="187"/>
    </location>
</feature>
<feature type="helix" evidence="14">
    <location>
        <begin position="188"/>
        <end position="191"/>
    </location>
</feature>
<feature type="helix" evidence="14">
    <location>
        <begin position="194"/>
        <end position="208"/>
    </location>
</feature>
<feature type="helix" evidence="14">
    <location>
        <begin position="214"/>
        <end position="218"/>
    </location>
</feature>
<feature type="helix" evidence="14">
    <location>
        <begin position="224"/>
        <end position="243"/>
    </location>
</feature>
<feature type="helix" evidence="14">
    <location>
        <begin position="246"/>
        <end position="256"/>
    </location>
</feature>
<reference key="1">
    <citation type="journal article" date="1991" name="Cell">
        <title>Isolation of three novel human cyclins by rescue of G1 cyclin (Cln) function in yeast.</title>
        <authorList>
            <person name="Lew D.J."/>
            <person name="Dulic V."/>
            <person name="Reed S.I."/>
        </authorList>
    </citation>
    <scope>NUCLEOTIDE SEQUENCE [MRNA] (ISOFORM 1)</scope>
</reference>
<reference key="2">
    <citation type="journal article" date="1996" name="Genomics">
        <title>Molecular cloning and chromosomal localization of the human cyclin C (CCNC) and cyclin E (CCNE) genes: deletion of the CCNC gene in human tumors.</title>
        <authorList>
            <person name="Li H."/>
            <person name="Lahti J.M."/>
            <person name="Valentine M."/>
            <person name="Saito M."/>
            <person name="Reed S.I."/>
            <person name="Look A.T."/>
            <person name="Kidd V.J."/>
        </authorList>
    </citation>
    <scope>NUCLEOTIDE SEQUENCE [GENOMIC DNA]</scope>
</reference>
<reference key="3">
    <citation type="journal article" date="2004" name="Nat. Genet.">
        <title>Complete sequencing and characterization of 21,243 full-length human cDNAs.</title>
        <authorList>
            <person name="Ota T."/>
            <person name="Suzuki Y."/>
            <person name="Nishikawa T."/>
            <person name="Otsuki T."/>
            <person name="Sugiyama T."/>
            <person name="Irie R."/>
            <person name="Wakamatsu A."/>
            <person name="Hayashi K."/>
            <person name="Sato H."/>
            <person name="Nagai K."/>
            <person name="Kimura K."/>
            <person name="Makita H."/>
            <person name="Sekine M."/>
            <person name="Obayashi M."/>
            <person name="Nishi T."/>
            <person name="Shibahara T."/>
            <person name="Tanaka T."/>
            <person name="Ishii S."/>
            <person name="Yamamoto J."/>
            <person name="Saito K."/>
            <person name="Kawai Y."/>
            <person name="Isono Y."/>
            <person name="Nakamura Y."/>
            <person name="Nagahari K."/>
            <person name="Murakami K."/>
            <person name="Yasuda T."/>
            <person name="Iwayanagi T."/>
            <person name="Wagatsuma M."/>
            <person name="Shiratori A."/>
            <person name="Sudo H."/>
            <person name="Hosoiri T."/>
            <person name="Kaku Y."/>
            <person name="Kodaira H."/>
            <person name="Kondo H."/>
            <person name="Sugawara M."/>
            <person name="Takahashi M."/>
            <person name="Kanda K."/>
            <person name="Yokoi T."/>
            <person name="Furuya T."/>
            <person name="Kikkawa E."/>
            <person name="Omura Y."/>
            <person name="Abe K."/>
            <person name="Kamihara K."/>
            <person name="Katsuta N."/>
            <person name="Sato K."/>
            <person name="Tanikawa M."/>
            <person name="Yamazaki M."/>
            <person name="Ninomiya K."/>
            <person name="Ishibashi T."/>
            <person name="Yamashita H."/>
            <person name="Murakawa K."/>
            <person name="Fujimori K."/>
            <person name="Tanai H."/>
            <person name="Kimata M."/>
            <person name="Watanabe M."/>
            <person name="Hiraoka S."/>
            <person name="Chiba Y."/>
            <person name="Ishida S."/>
            <person name="Ono Y."/>
            <person name="Takiguchi S."/>
            <person name="Watanabe S."/>
            <person name="Yosida M."/>
            <person name="Hotuta T."/>
            <person name="Kusano J."/>
            <person name="Kanehori K."/>
            <person name="Takahashi-Fujii A."/>
            <person name="Hara H."/>
            <person name="Tanase T.-O."/>
            <person name="Nomura Y."/>
            <person name="Togiya S."/>
            <person name="Komai F."/>
            <person name="Hara R."/>
            <person name="Takeuchi K."/>
            <person name="Arita M."/>
            <person name="Imose N."/>
            <person name="Musashino K."/>
            <person name="Yuuki H."/>
            <person name="Oshima A."/>
            <person name="Sasaki N."/>
            <person name="Aotsuka S."/>
            <person name="Yoshikawa Y."/>
            <person name="Matsunawa H."/>
            <person name="Ichihara T."/>
            <person name="Shiohata N."/>
            <person name="Sano S."/>
            <person name="Moriya S."/>
            <person name="Momiyama H."/>
            <person name="Satoh N."/>
            <person name="Takami S."/>
            <person name="Terashima Y."/>
            <person name="Suzuki O."/>
            <person name="Nakagawa S."/>
            <person name="Senoh A."/>
            <person name="Mizoguchi H."/>
            <person name="Goto Y."/>
            <person name="Shimizu F."/>
            <person name="Wakebe H."/>
            <person name="Hishigaki H."/>
            <person name="Watanabe T."/>
            <person name="Sugiyama A."/>
            <person name="Takemoto M."/>
            <person name="Kawakami B."/>
            <person name="Yamazaki M."/>
            <person name="Watanabe K."/>
            <person name="Kumagai A."/>
            <person name="Itakura S."/>
            <person name="Fukuzumi Y."/>
            <person name="Fujimori Y."/>
            <person name="Komiyama M."/>
            <person name="Tashiro H."/>
            <person name="Tanigami A."/>
            <person name="Fujiwara T."/>
            <person name="Ono T."/>
            <person name="Yamada K."/>
            <person name="Fujii Y."/>
            <person name="Ozaki K."/>
            <person name="Hirao M."/>
            <person name="Ohmori Y."/>
            <person name="Kawabata A."/>
            <person name="Hikiji T."/>
            <person name="Kobatake N."/>
            <person name="Inagaki H."/>
            <person name="Ikema Y."/>
            <person name="Okamoto S."/>
            <person name="Okitani R."/>
            <person name="Kawakami T."/>
            <person name="Noguchi S."/>
            <person name="Itoh T."/>
            <person name="Shigeta K."/>
            <person name="Senba T."/>
            <person name="Matsumura K."/>
            <person name="Nakajima Y."/>
            <person name="Mizuno T."/>
            <person name="Morinaga M."/>
            <person name="Sasaki M."/>
            <person name="Togashi T."/>
            <person name="Oyama M."/>
            <person name="Hata H."/>
            <person name="Watanabe M."/>
            <person name="Komatsu T."/>
            <person name="Mizushima-Sugano J."/>
            <person name="Satoh T."/>
            <person name="Shirai Y."/>
            <person name="Takahashi Y."/>
            <person name="Nakagawa K."/>
            <person name="Okumura K."/>
            <person name="Nagase T."/>
            <person name="Nomura N."/>
            <person name="Kikuchi H."/>
            <person name="Masuho Y."/>
            <person name="Yamashita R."/>
            <person name="Nakai K."/>
            <person name="Yada T."/>
            <person name="Nakamura Y."/>
            <person name="Ohara O."/>
            <person name="Isogai T."/>
            <person name="Sugano S."/>
        </authorList>
    </citation>
    <scope>NUCLEOTIDE SEQUENCE [LARGE SCALE MRNA] (ISOFORM 2)</scope>
</reference>
<reference key="4">
    <citation type="journal article" date="2003" name="Nature">
        <title>The DNA sequence and analysis of human chromosome 6.</title>
        <authorList>
            <person name="Mungall A.J."/>
            <person name="Palmer S.A."/>
            <person name="Sims S.K."/>
            <person name="Edwards C.A."/>
            <person name="Ashurst J.L."/>
            <person name="Wilming L."/>
            <person name="Jones M.C."/>
            <person name="Horton R."/>
            <person name="Hunt S.E."/>
            <person name="Scott C.E."/>
            <person name="Gilbert J.G.R."/>
            <person name="Clamp M.E."/>
            <person name="Bethel G."/>
            <person name="Milne S."/>
            <person name="Ainscough R."/>
            <person name="Almeida J.P."/>
            <person name="Ambrose K.D."/>
            <person name="Andrews T.D."/>
            <person name="Ashwell R.I.S."/>
            <person name="Babbage A.K."/>
            <person name="Bagguley C.L."/>
            <person name="Bailey J."/>
            <person name="Banerjee R."/>
            <person name="Barker D.J."/>
            <person name="Barlow K.F."/>
            <person name="Bates K."/>
            <person name="Beare D.M."/>
            <person name="Beasley H."/>
            <person name="Beasley O."/>
            <person name="Bird C.P."/>
            <person name="Blakey S.E."/>
            <person name="Bray-Allen S."/>
            <person name="Brook J."/>
            <person name="Brown A.J."/>
            <person name="Brown J.Y."/>
            <person name="Burford D.C."/>
            <person name="Burrill W."/>
            <person name="Burton J."/>
            <person name="Carder C."/>
            <person name="Carter N.P."/>
            <person name="Chapman J.C."/>
            <person name="Clark S.Y."/>
            <person name="Clark G."/>
            <person name="Clee C.M."/>
            <person name="Clegg S."/>
            <person name="Cobley V."/>
            <person name="Collier R.E."/>
            <person name="Collins J.E."/>
            <person name="Colman L.K."/>
            <person name="Corby N.R."/>
            <person name="Coville G.J."/>
            <person name="Culley K.M."/>
            <person name="Dhami P."/>
            <person name="Davies J."/>
            <person name="Dunn M."/>
            <person name="Earthrowl M.E."/>
            <person name="Ellington A.E."/>
            <person name="Evans K.A."/>
            <person name="Faulkner L."/>
            <person name="Francis M.D."/>
            <person name="Frankish A."/>
            <person name="Frankland J."/>
            <person name="French L."/>
            <person name="Garner P."/>
            <person name="Garnett J."/>
            <person name="Ghori M.J."/>
            <person name="Gilby L.M."/>
            <person name="Gillson C.J."/>
            <person name="Glithero R.J."/>
            <person name="Grafham D.V."/>
            <person name="Grant M."/>
            <person name="Gribble S."/>
            <person name="Griffiths C."/>
            <person name="Griffiths M.N.D."/>
            <person name="Hall R."/>
            <person name="Halls K.S."/>
            <person name="Hammond S."/>
            <person name="Harley J.L."/>
            <person name="Hart E.A."/>
            <person name="Heath P.D."/>
            <person name="Heathcott R."/>
            <person name="Holmes S.J."/>
            <person name="Howden P.J."/>
            <person name="Howe K.L."/>
            <person name="Howell G.R."/>
            <person name="Huckle E."/>
            <person name="Humphray S.J."/>
            <person name="Humphries M.D."/>
            <person name="Hunt A.R."/>
            <person name="Johnson C.M."/>
            <person name="Joy A.A."/>
            <person name="Kay M."/>
            <person name="Keenan S.J."/>
            <person name="Kimberley A.M."/>
            <person name="King A."/>
            <person name="Laird G.K."/>
            <person name="Langford C."/>
            <person name="Lawlor S."/>
            <person name="Leongamornlert D.A."/>
            <person name="Leversha M."/>
            <person name="Lloyd C.R."/>
            <person name="Lloyd D.M."/>
            <person name="Loveland J.E."/>
            <person name="Lovell J."/>
            <person name="Martin S."/>
            <person name="Mashreghi-Mohammadi M."/>
            <person name="Maslen G.L."/>
            <person name="Matthews L."/>
            <person name="McCann O.T."/>
            <person name="McLaren S.J."/>
            <person name="McLay K."/>
            <person name="McMurray A."/>
            <person name="Moore M.J.F."/>
            <person name="Mullikin J.C."/>
            <person name="Niblett D."/>
            <person name="Nickerson T."/>
            <person name="Novik K.L."/>
            <person name="Oliver K."/>
            <person name="Overton-Larty E.K."/>
            <person name="Parker A."/>
            <person name="Patel R."/>
            <person name="Pearce A.V."/>
            <person name="Peck A.I."/>
            <person name="Phillimore B.J.C.T."/>
            <person name="Phillips S."/>
            <person name="Plumb R.W."/>
            <person name="Porter K.M."/>
            <person name="Ramsey Y."/>
            <person name="Ranby S.A."/>
            <person name="Rice C.M."/>
            <person name="Ross M.T."/>
            <person name="Searle S.M."/>
            <person name="Sehra H.K."/>
            <person name="Sheridan E."/>
            <person name="Skuce C.D."/>
            <person name="Smith S."/>
            <person name="Smith M."/>
            <person name="Spraggon L."/>
            <person name="Squares S.L."/>
            <person name="Steward C.A."/>
            <person name="Sycamore N."/>
            <person name="Tamlyn-Hall G."/>
            <person name="Tester J."/>
            <person name="Theaker A.J."/>
            <person name="Thomas D.W."/>
            <person name="Thorpe A."/>
            <person name="Tracey A."/>
            <person name="Tromans A."/>
            <person name="Tubby B."/>
            <person name="Wall M."/>
            <person name="Wallis J.M."/>
            <person name="West A.P."/>
            <person name="White S.S."/>
            <person name="Whitehead S.L."/>
            <person name="Whittaker H."/>
            <person name="Wild A."/>
            <person name="Willey D.J."/>
            <person name="Wilmer T.E."/>
            <person name="Wood J.M."/>
            <person name="Wray P.W."/>
            <person name="Wyatt J.C."/>
            <person name="Young L."/>
            <person name="Younger R.M."/>
            <person name="Bentley D.R."/>
            <person name="Coulson A."/>
            <person name="Durbin R.M."/>
            <person name="Hubbard T."/>
            <person name="Sulston J.E."/>
            <person name="Dunham I."/>
            <person name="Rogers J."/>
            <person name="Beck S."/>
        </authorList>
    </citation>
    <scope>NUCLEOTIDE SEQUENCE [LARGE SCALE GENOMIC DNA]</scope>
</reference>
<reference key="5">
    <citation type="journal article" date="1996" name="Oncogene">
        <title>Cyclin C/CDK8 is a novel CTD kinase associated with RNA polymerase II.</title>
        <authorList>
            <person name="Rickert P."/>
            <person name="Seghezzi W."/>
            <person name="Shanahan F."/>
            <person name="Cho H."/>
            <person name="Lees E."/>
        </authorList>
    </citation>
    <scope>FUNCTION</scope>
</reference>
<reference key="6">
    <citation type="journal article" date="1998" name="Mol. Cell">
        <title>NAT, a human complex containing Srb polypeptides that functions as a negative regulator of activated transcription.</title>
        <authorList>
            <person name="Sun X."/>
            <person name="Zhang Y."/>
            <person name="Cho H."/>
            <person name="Rickert P."/>
            <person name="Lees E."/>
            <person name="Lane W.S."/>
            <person name="Reinberg D."/>
        </authorList>
    </citation>
    <scope>IDENTIFICATION BY MASS SPECTROMETRY</scope>
    <scope>IDENTIFICATION IN A FORM OF THE MEDIATOR COMPLEX</scope>
</reference>
<reference key="7">
    <citation type="journal article" date="1999" name="Mol. Cell">
        <title>A novel human SRB/MED-containing cofactor complex, SMCC, involved in transcription regulation.</title>
        <authorList>
            <person name="Gu W."/>
            <person name="Malik S."/>
            <person name="Ito M."/>
            <person name="Yuan C.-X."/>
            <person name="Fondell J.D."/>
            <person name="Zhang X."/>
            <person name="Martinez E."/>
            <person name="Qin J."/>
            <person name="Roeder R.G."/>
        </authorList>
    </citation>
    <scope>IDENTIFICATION BY MASS SPECTROMETRY</scope>
    <scope>IDENTIFICATION IN THE SMCC COMPLEX</scope>
</reference>
<reference key="8">
    <citation type="journal article" date="1999" name="Mol. Cell">
        <authorList>
            <person name="Gu W."/>
            <person name="Malik S."/>
            <person name="Ito M."/>
            <person name="Yuan C.-X."/>
            <person name="Fondell J.D."/>
            <person name="Zhang X."/>
            <person name="Martinez E."/>
            <person name="Qin J."/>
            <person name="Roeder R.G."/>
        </authorList>
    </citation>
    <scope>ERRATUM OF PUBMED:10024883</scope>
</reference>
<reference key="9">
    <citation type="journal article" date="2000" name="Nature">
        <title>TFIIH is negatively regulated by cdk8-containing mediator complexes.</title>
        <authorList>
            <person name="Akoulitchev S."/>
            <person name="Chuikov S."/>
            <person name="Reinberg D."/>
        </authorList>
    </citation>
    <scope>INTERACTION WITH MED6</scope>
</reference>
<reference key="10">
    <citation type="journal article" date="2004" name="Mol. Cell">
        <title>A set of consensus mammalian mediator subunits identified by multidimensional protein identification technology.</title>
        <authorList>
            <person name="Sato S."/>
            <person name="Tomomori-Sato C."/>
            <person name="Parmely T.J."/>
            <person name="Florens L."/>
            <person name="Zybailov B."/>
            <person name="Swanson S.K."/>
            <person name="Banks C.A.S."/>
            <person name="Jin J."/>
            <person name="Cai Y."/>
            <person name="Washburn M.P."/>
            <person name="Conaway J.W."/>
            <person name="Conaway R.C."/>
        </authorList>
    </citation>
    <scope>IDENTIFICATION BY MASS SPECTROMETRY</scope>
    <scope>IDENTIFICATION IN THE MEDIATOR COMPLEX</scope>
</reference>
<reference key="11">
    <citation type="journal article" date="2006" name="J. Biol. Chem.">
        <title>Human Mediator enhances basal transcription by facilitating recruitment of transcription factor IIB during preinitiation complex assembly.</title>
        <authorList>
            <person name="Baek H.J."/>
            <person name="Kang Y.K."/>
            <person name="Roeder R.G."/>
        </authorList>
    </citation>
    <scope>FUNCTION</scope>
    <scope>INTERACTION WITH MED1 AND MED10</scope>
</reference>
<reference key="12">
    <citation type="journal article" date="2007" name="Science">
        <title>ATM and ATR substrate analysis reveals extensive protein networks responsive to DNA damage.</title>
        <authorList>
            <person name="Matsuoka S."/>
            <person name="Ballif B.A."/>
            <person name="Smogorzewska A."/>
            <person name="McDonald E.R. III"/>
            <person name="Hurov K.E."/>
            <person name="Luo J."/>
            <person name="Bakalarski C.E."/>
            <person name="Zhao Z."/>
            <person name="Solimini N."/>
            <person name="Lerenthal Y."/>
            <person name="Shiloh Y."/>
            <person name="Gygi S.P."/>
            <person name="Elledge S.J."/>
        </authorList>
    </citation>
    <scope>PHOSPHORYLATION [LARGE SCALE ANALYSIS] AT SER-275</scope>
    <scope>IDENTIFICATION BY MASS SPECTROMETRY [LARGE SCALE ANALYSIS]</scope>
    <source>
        <tissue>Embryonic kidney</tissue>
    </source>
</reference>
<reference key="13">
    <citation type="journal article" date="2009" name="Mol. Cell. Proteomics">
        <title>Large-scale proteomics analysis of the human kinome.</title>
        <authorList>
            <person name="Oppermann F.S."/>
            <person name="Gnad F."/>
            <person name="Olsen J.V."/>
            <person name="Hornberger R."/>
            <person name="Greff Z."/>
            <person name="Keri G."/>
            <person name="Mann M."/>
            <person name="Daub H."/>
        </authorList>
    </citation>
    <scope>IDENTIFICATION BY MASS SPECTROMETRY [LARGE SCALE ANALYSIS]</scope>
</reference>
<reference key="14">
    <citation type="journal article" date="2011" name="J. Mol. Biol.">
        <title>The structure of CDK8/CycC implicates specificity in the CDK/cyclin family and reveals interaction with a deep pocket binder.</title>
        <authorList>
            <person name="Schneider E.V."/>
            <person name="Bottcher J."/>
            <person name="Blaesse M."/>
            <person name="Neumann L."/>
            <person name="Huber R."/>
            <person name="Maskos K."/>
        </authorList>
    </citation>
    <scope>X-RAY CRYSTALLOGRAPHY (2.2 ANGSTROMS) IN COMPLEX WITH CDK8 AND INHIBITOR</scope>
</reference>
<organism>
    <name type="scientific">Homo sapiens</name>
    <name type="common">Human</name>
    <dbReference type="NCBI Taxonomy" id="9606"/>
    <lineage>
        <taxon>Eukaryota</taxon>
        <taxon>Metazoa</taxon>
        <taxon>Chordata</taxon>
        <taxon>Craniata</taxon>
        <taxon>Vertebrata</taxon>
        <taxon>Euteleostomi</taxon>
        <taxon>Mammalia</taxon>
        <taxon>Eutheria</taxon>
        <taxon>Euarchontoglires</taxon>
        <taxon>Primates</taxon>
        <taxon>Haplorrhini</taxon>
        <taxon>Catarrhini</taxon>
        <taxon>Hominidae</taxon>
        <taxon>Homo</taxon>
    </lineage>
</organism>